<feature type="chain" id="PRO_0000184028" description="Alpha-synuclein">
    <location>
        <begin position="1"/>
        <end position="140"/>
    </location>
</feature>
<feature type="region of interest" description="Disordered" evidence="5">
    <location>
        <begin position="100"/>
        <end position="140"/>
    </location>
</feature>
<feature type="region of interest" description="Interaction with SERF1A" evidence="4">
    <location>
        <begin position="111"/>
        <end position="140"/>
    </location>
</feature>
<feature type="compositionally biased region" description="Acidic residues" evidence="5">
    <location>
        <begin position="112"/>
        <end position="140"/>
    </location>
</feature>
<feature type="binding site" evidence="1">
    <location>
        <position position="2"/>
    </location>
    <ligand>
        <name>Cu cation</name>
        <dbReference type="ChEBI" id="CHEBI:23378"/>
    </ligand>
</feature>
<feature type="binding site" evidence="1">
    <location>
        <position position="50"/>
    </location>
    <ligand>
        <name>Cu cation</name>
        <dbReference type="ChEBI" id="CHEBI:23378"/>
    </ligand>
</feature>
<feature type="modified residue" description="N-acetylmethionine" evidence="4">
    <location>
        <position position="1"/>
    </location>
</feature>
<feature type="modified residue" description="Phosphoserine" evidence="4">
    <location>
        <position position="87"/>
    </location>
</feature>
<feature type="modified residue" description="Phosphotyrosine; by FYN" evidence="4">
    <location>
        <position position="125"/>
    </location>
</feature>
<feature type="modified residue" description="Phosphoserine; by PLK2" evidence="4">
    <location>
        <position position="129"/>
    </location>
</feature>
<proteinExistence type="inferred from homology"/>
<accession>P61145</accession>
<organism>
    <name type="scientific">Pan troglodytes</name>
    <name type="common">Chimpanzee</name>
    <dbReference type="NCBI Taxonomy" id="9598"/>
    <lineage>
        <taxon>Eukaryota</taxon>
        <taxon>Metazoa</taxon>
        <taxon>Chordata</taxon>
        <taxon>Craniata</taxon>
        <taxon>Vertebrata</taxon>
        <taxon>Euteleostomi</taxon>
        <taxon>Mammalia</taxon>
        <taxon>Eutheria</taxon>
        <taxon>Euarchontoglires</taxon>
        <taxon>Primates</taxon>
        <taxon>Haplorrhini</taxon>
        <taxon>Catarrhini</taxon>
        <taxon>Hominidae</taxon>
        <taxon>Pan</taxon>
    </lineage>
</organism>
<dbReference type="EMBL" id="AY362294">
    <property type="protein sequence ID" value="AAQ85069.1"/>
    <property type="molecule type" value="Genomic_DNA"/>
</dbReference>
<dbReference type="EMBL" id="AY362290">
    <property type="protein sequence ID" value="AAQ85069.1"/>
    <property type="status" value="JOINED"/>
    <property type="molecule type" value="Genomic_DNA"/>
</dbReference>
<dbReference type="EMBL" id="AY362291">
    <property type="protein sequence ID" value="AAQ85069.1"/>
    <property type="status" value="JOINED"/>
    <property type="molecule type" value="Genomic_DNA"/>
</dbReference>
<dbReference type="EMBL" id="AY362292">
    <property type="protein sequence ID" value="AAQ85069.1"/>
    <property type="status" value="JOINED"/>
    <property type="molecule type" value="Genomic_DNA"/>
</dbReference>
<dbReference type="EMBL" id="AY362293">
    <property type="protein sequence ID" value="AAQ85069.1"/>
    <property type="status" value="JOINED"/>
    <property type="molecule type" value="Genomic_DNA"/>
</dbReference>
<dbReference type="RefSeq" id="NP_001009158.1">
    <property type="nucleotide sequence ID" value="NM_001009158.4"/>
</dbReference>
<dbReference type="RefSeq" id="XP_009446186.1">
    <property type="nucleotide sequence ID" value="XM_009447911.5"/>
</dbReference>
<dbReference type="RefSeq" id="XP_009446187.1">
    <property type="nucleotide sequence ID" value="XM_009447912.5"/>
</dbReference>
<dbReference type="RefSeq" id="XP_009446188.1">
    <property type="nucleotide sequence ID" value="XM_009447913.5"/>
</dbReference>
<dbReference type="RefSeq" id="XP_063664147.1">
    <property type="nucleotide sequence ID" value="XM_063808077.1"/>
</dbReference>
<dbReference type="SMR" id="P61145"/>
<dbReference type="FunCoup" id="P61145">
    <property type="interactions" value="324"/>
</dbReference>
<dbReference type="STRING" id="9598.ENSPTRP00000090843"/>
<dbReference type="PaxDb" id="9598-ENSPTRP00000054542"/>
<dbReference type="Ensembl" id="ENSPTRT00000110874.1">
    <property type="protein sequence ID" value="ENSPTRP00000090843.1"/>
    <property type="gene ID" value="ENSPTRG00000052247.1"/>
</dbReference>
<dbReference type="GeneID" id="461375"/>
<dbReference type="KEGG" id="ptr:461375"/>
<dbReference type="CTD" id="6622"/>
<dbReference type="VGNC" id="VGNC:1998">
    <property type="gene designation" value="SNCA"/>
</dbReference>
<dbReference type="eggNOG" id="ENOG502S0Q7">
    <property type="taxonomic scope" value="Eukaryota"/>
</dbReference>
<dbReference type="GeneTree" id="ENSGT00950000183175"/>
<dbReference type="HOGENOM" id="CLU_129378_1_0_1"/>
<dbReference type="InParanoid" id="P61145"/>
<dbReference type="OMA" id="LPQEGMM"/>
<dbReference type="OrthoDB" id="16349at9604"/>
<dbReference type="TreeFam" id="TF332776"/>
<dbReference type="Proteomes" id="UP000002277">
    <property type="component" value="Chromosome 4"/>
</dbReference>
<dbReference type="Bgee" id="ENSPTRG00000052247">
    <property type="expression patterns" value="Expressed in Brodmann (1909) area 10 and 19 other cell types or tissues"/>
</dbReference>
<dbReference type="GO" id="GO:0015629">
    <property type="term" value="C:actin cytoskeleton"/>
    <property type="evidence" value="ECO:0007669"/>
    <property type="project" value="Ensembl"/>
</dbReference>
<dbReference type="GO" id="GO:0043679">
    <property type="term" value="C:axon terminus"/>
    <property type="evidence" value="ECO:0000318"/>
    <property type="project" value="GO_Central"/>
</dbReference>
<dbReference type="GO" id="GO:0005938">
    <property type="term" value="C:cell cortex"/>
    <property type="evidence" value="ECO:0007669"/>
    <property type="project" value="Ensembl"/>
</dbReference>
<dbReference type="GO" id="GO:0005737">
    <property type="term" value="C:cytoplasm"/>
    <property type="evidence" value="ECO:0000318"/>
    <property type="project" value="GO_Central"/>
</dbReference>
<dbReference type="GO" id="GO:0005829">
    <property type="term" value="C:cytosol"/>
    <property type="evidence" value="ECO:0000250"/>
    <property type="project" value="UniProtKB"/>
</dbReference>
<dbReference type="GO" id="GO:0005615">
    <property type="term" value="C:extracellular space"/>
    <property type="evidence" value="ECO:0000250"/>
    <property type="project" value="UniProtKB"/>
</dbReference>
<dbReference type="GO" id="GO:0030426">
    <property type="term" value="C:growth cone"/>
    <property type="evidence" value="ECO:0007669"/>
    <property type="project" value="Ensembl"/>
</dbReference>
<dbReference type="GO" id="GO:0016234">
    <property type="term" value="C:inclusion body"/>
    <property type="evidence" value="ECO:0007669"/>
    <property type="project" value="Ensembl"/>
</dbReference>
<dbReference type="GO" id="GO:0016020">
    <property type="term" value="C:membrane"/>
    <property type="evidence" value="ECO:0000250"/>
    <property type="project" value="UniProtKB"/>
</dbReference>
<dbReference type="GO" id="GO:0005739">
    <property type="term" value="C:mitochondrion"/>
    <property type="evidence" value="ECO:0007669"/>
    <property type="project" value="GOC"/>
</dbReference>
<dbReference type="GO" id="GO:0043025">
    <property type="term" value="C:neuronal cell body"/>
    <property type="evidence" value="ECO:0000318"/>
    <property type="project" value="GO_Central"/>
</dbReference>
<dbReference type="GO" id="GO:0005634">
    <property type="term" value="C:nucleus"/>
    <property type="evidence" value="ECO:0000250"/>
    <property type="project" value="UniProtKB"/>
</dbReference>
<dbReference type="GO" id="GO:0048471">
    <property type="term" value="C:perinuclear region of cytoplasm"/>
    <property type="evidence" value="ECO:0007669"/>
    <property type="project" value="Ensembl"/>
</dbReference>
<dbReference type="GO" id="GO:0005886">
    <property type="term" value="C:plasma membrane"/>
    <property type="evidence" value="ECO:0007669"/>
    <property type="project" value="Ensembl"/>
</dbReference>
<dbReference type="GO" id="GO:0031092">
    <property type="term" value="C:platelet alpha granule membrane"/>
    <property type="evidence" value="ECO:0007669"/>
    <property type="project" value="Ensembl"/>
</dbReference>
<dbReference type="GO" id="GO:0098794">
    <property type="term" value="C:postsynapse"/>
    <property type="evidence" value="ECO:0007669"/>
    <property type="project" value="GOC"/>
</dbReference>
<dbReference type="GO" id="GO:0032991">
    <property type="term" value="C:protein-containing complex"/>
    <property type="evidence" value="ECO:0007669"/>
    <property type="project" value="Ensembl"/>
</dbReference>
<dbReference type="GO" id="GO:0099512">
    <property type="term" value="C:supramolecular fiber"/>
    <property type="evidence" value="ECO:0007669"/>
    <property type="project" value="Ensembl"/>
</dbReference>
<dbReference type="GO" id="GO:0030672">
    <property type="term" value="C:synaptic vesicle membrane"/>
    <property type="evidence" value="ECO:0007669"/>
    <property type="project" value="Ensembl"/>
</dbReference>
<dbReference type="GO" id="GO:0003779">
    <property type="term" value="F:actin binding"/>
    <property type="evidence" value="ECO:0007669"/>
    <property type="project" value="Ensembl"/>
</dbReference>
<dbReference type="GO" id="GO:0043014">
    <property type="term" value="F:alpha-tubulin binding"/>
    <property type="evidence" value="ECO:0007669"/>
    <property type="project" value="Ensembl"/>
</dbReference>
<dbReference type="GO" id="GO:0050544">
    <property type="term" value="F:arachidonate binding"/>
    <property type="evidence" value="ECO:0007669"/>
    <property type="project" value="Ensembl"/>
</dbReference>
<dbReference type="GO" id="GO:0005509">
    <property type="term" value="F:calcium ion binding"/>
    <property type="evidence" value="ECO:0007669"/>
    <property type="project" value="Ensembl"/>
</dbReference>
<dbReference type="GO" id="GO:0005507">
    <property type="term" value="F:copper ion binding"/>
    <property type="evidence" value="ECO:0000250"/>
    <property type="project" value="UniProtKB"/>
</dbReference>
<dbReference type="GO" id="GO:1903136">
    <property type="term" value="F:cuprous ion binding"/>
    <property type="evidence" value="ECO:0000318"/>
    <property type="project" value="GO_Central"/>
</dbReference>
<dbReference type="GO" id="GO:0004869">
    <property type="term" value="F:cysteine-type endopeptidase inhibitor activity"/>
    <property type="evidence" value="ECO:0007669"/>
    <property type="project" value="Ensembl"/>
</dbReference>
<dbReference type="GO" id="GO:0070840">
    <property type="term" value="F:dynein complex binding"/>
    <property type="evidence" value="ECO:0007669"/>
    <property type="project" value="Ensembl"/>
</dbReference>
<dbReference type="GO" id="GO:0008198">
    <property type="term" value="F:ferrous iron binding"/>
    <property type="evidence" value="ECO:0007669"/>
    <property type="project" value="Ensembl"/>
</dbReference>
<dbReference type="GO" id="GO:0042393">
    <property type="term" value="F:histone binding"/>
    <property type="evidence" value="ECO:0007669"/>
    <property type="project" value="Ensembl"/>
</dbReference>
<dbReference type="GO" id="GO:0030544">
    <property type="term" value="F:Hsp70 protein binding"/>
    <property type="evidence" value="ECO:0007669"/>
    <property type="project" value="Ensembl"/>
</dbReference>
<dbReference type="GO" id="GO:0042802">
    <property type="term" value="F:identical protein binding"/>
    <property type="evidence" value="ECO:0000250"/>
    <property type="project" value="UniProtKB"/>
</dbReference>
<dbReference type="GO" id="GO:0019894">
    <property type="term" value="F:kinesin binding"/>
    <property type="evidence" value="ECO:0007669"/>
    <property type="project" value="Ensembl"/>
</dbReference>
<dbReference type="GO" id="GO:0000287">
    <property type="term" value="F:magnesium ion binding"/>
    <property type="evidence" value="ECO:0007669"/>
    <property type="project" value="Ensembl"/>
</dbReference>
<dbReference type="GO" id="GO:0016491">
    <property type="term" value="F:oxidoreductase activity"/>
    <property type="evidence" value="ECO:0007669"/>
    <property type="project" value="Ensembl"/>
</dbReference>
<dbReference type="GO" id="GO:0005543">
    <property type="term" value="F:phospholipid binding"/>
    <property type="evidence" value="ECO:0007669"/>
    <property type="project" value="Ensembl"/>
</dbReference>
<dbReference type="GO" id="GO:0051219">
    <property type="term" value="F:phosphoprotein binding"/>
    <property type="evidence" value="ECO:0007669"/>
    <property type="project" value="Ensembl"/>
</dbReference>
<dbReference type="GO" id="GO:0000149">
    <property type="term" value="F:SNARE binding"/>
    <property type="evidence" value="ECO:0007669"/>
    <property type="project" value="Ensembl"/>
</dbReference>
<dbReference type="GO" id="GO:0048156">
    <property type="term" value="F:tau protein binding"/>
    <property type="evidence" value="ECO:0007669"/>
    <property type="project" value="Ensembl"/>
</dbReference>
<dbReference type="GO" id="GO:0141108">
    <property type="term" value="F:transporter regulator activity"/>
    <property type="evidence" value="ECO:0007669"/>
    <property type="project" value="Ensembl"/>
</dbReference>
<dbReference type="GO" id="GO:0008270">
    <property type="term" value="F:zinc ion binding"/>
    <property type="evidence" value="ECO:0007669"/>
    <property type="project" value="Ensembl"/>
</dbReference>
<dbReference type="GO" id="GO:0008344">
    <property type="term" value="P:adult locomotory behavior"/>
    <property type="evidence" value="ECO:0007669"/>
    <property type="project" value="Ensembl"/>
</dbReference>
<dbReference type="GO" id="GO:0071280">
    <property type="term" value="P:cellular response to copper ion"/>
    <property type="evidence" value="ECO:0007669"/>
    <property type="project" value="Ensembl"/>
</dbReference>
<dbReference type="GO" id="GO:0034599">
    <property type="term" value="P:cellular response to oxidative stress"/>
    <property type="evidence" value="ECO:0007669"/>
    <property type="project" value="Ensembl"/>
</dbReference>
<dbReference type="GO" id="GO:0007268">
    <property type="term" value="P:chemical synaptic transmission"/>
    <property type="evidence" value="ECO:0000318"/>
    <property type="project" value="GO_Central"/>
</dbReference>
<dbReference type="GO" id="GO:0042416">
    <property type="term" value="P:dopamine biosynthetic process"/>
    <property type="evidence" value="ECO:0007669"/>
    <property type="project" value="Ensembl"/>
</dbReference>
<dbReference type="GO" id="GO:0060079">
    <property type="term" value="P:excitatory postsynaptic potential"/>
    <property type="evidence" value="ECO:0007669"/>
    <property type="project" value="Ensembl"/>
</dbReference>
<dbReference type="GO" id="GO:0006631">
    <property type="term" value="P:fatty acid metabolic process"/>
    <property type="evidence" value="ECO:0007669"/>
    <property type="project" value="Ensembl"/>
</dbReference>
<dbReference type="GO" id="GO:0060291">
    <property type="term" value="P:long-term synaptic potentiation"/>
    <property type="evidence" value="ECO:0007669"/>
    <property type="project" value="Ensembl"/>
</dbReference>
<dbReference type="GO" id="GO:0001774">
    <property type="term" value="P:microglial cell activation"/>
    <property type="evidence" value="ECO:0007669"/>
    <property type="project" value="Ensembl"/>
</dbReference>
<dbReference type="GO" id="GO:0042775">
    <property type="term" value="P:mitochondrial ATP synthesis coupled electron transport"/>
    <property type="evidence" value="ECO:0007669"/>
    <property type="project" value="Ensembl"/>
</dbReference>
<dbReference type="GO" id="GO:0007006">
    <property type="term" value="P:mitochondrial membrane organization"/>
    <property type="evidence" value="ECO:0007669"/>
    <property type="project" value="Ensembl"/>
</dbReference>
<dbReference type="GO" id="GO:1904715">
    <property type="term" value="P:negative regulation of chaperone-mediated autophagy"/>
    <property type="evidence" value="ECO:0007669"/>
    <property type="project" value="Ensembl"/>
</dbReference>
<dbReference type="GO" id="GO:0051585">
    <property type="term" value="P:negative regulation of dopamine uptake involved in synaptic transmission"/>
    <property type="evidence" value="ECO:0007669"/>
    <property type="project" value="Ensembl"/>
</dbReference>
<dbReference type="GO" id="GO:0045920">
    <property type="term" value="P:negative regulation of exocytosis"/>
    <property type="evidence" value="ECO:0007669"/>
    <property type="project" value="Ensembl"/>
</dbReference>
<dbReference type="GO" id="GO:0031115">
    <property type="term" value="P:negative regulation of microtubule polymerization"/>
    <property type="evidence" value="ECO:0007669"/>
    <property type="project" value="Ensembl"/>
</dbReference>
<dbReference type="GO" id="GO:0043524">
    <property type="term" value="P:negative regulation of neuron apoptotic process"/>
    <property type="evidence" value="ECO:0007669"/>
    <property type="project" value="Ensembl"/>
</dbReference>
<dbReference type="GO" id="GO:0051622">
    <property type="term" value="P:negative regulation of norepinephrine uptake"/>
    <property type="evidence" value="ECO:0007669"/>
    <property type="project" value="Ensembl"/>
</dbReference>
<dbReference type="GO" id="GO:0010642">
    <property type="term" value="P:negative regulation of platelet-derived growth factor receptor signaling pathway"/>
    <property type="evidence" value="ECO:0007669"/>
    <property type="project" value="Ensembl"/>
</dbReference>
<dbReference type="GO" id="GO:0051612">
    <property type="term" value="P:negative regulation of serotonin uptake"/>
    <property type="evidence" value="ECO:0007669"/>
    <property type="project" value="Ensembl"/>
</dbReference>
<dbReference type="GO" id="GO:0070495">
    <property type="term" value="P:negative regulation of thrombin-activated receptor signaling pathway"/>
    <property type="evidence" value="ECO:0007669"/>
    <property type="project" value="Ensembl"/>
</dbReference>
<dbReference type="GO" id="GO:0051402">
    <property type="term" value="P:neuron apoptotic process"/>
    <property type="evidence" value="ECO:0007669"/>
    <property type="project" value="Ensembl"/>
</dbReference>
<dbReference type="GO" id="GO:0006638">
    <property type="term" value="P:neutral lipid metabolic process"/>
    <property type="evidence" value="ECO:0007669"/>
    <property type="project" value="Ensembl"/>
</dbReference>
<dbReference type="GO" id="GO:0006644">
    <property type="term" value="P:phospholipid metabolic process"/>
    <property type="evidence" value="ECO:0007669"/>
    <property type="project" value="Ensembl"/>
</dbReference>
<dbReference type="GO" id="GO:0045807">
    <property type="term" value="P:positive regulation of endocytosis"/>
    <property type="evidence" value="ECO:0007669"/>
    <property type="project" value="Ensembl"/>
</dbReference>
<dbReference type="GO" id="GO:0045921">
    <property type="term" value="P:positive regulation of exocytosis"/>
    <property type="evidence" value="ECO:0007669"/>
    <property type="project" value="Ensembl"/>
</dbReference>
<dbReference type="GO" id="GO:1903285">
    <property type="term" value="P:positive regulation of hydrogen peroxide catabolic process"/>
    <property type="evidence" value="ECO:0007669"/>
    <property type="project" value="Ensembl"/>
</dbReference>
<dbReference type="GO" id="GO:0050729">
    <property type="term" value="P:positive regulation of inflammatory response"/>
    <property type="evidence" value="ECO:0007669"/>
    <property type="project" value="Ensembl"/>
</dbReference>
<dbReference type="GO" id="GO:0060732">
    <property type="term" value="P:positive regulation of inositol phosphate biosynthetic process"/>
    <property type="evidence" value="ECO:0007669"/>
    <property type="project" value="Ensembl"/>
</dbReference>
<dbReference type="GO" id="GO:0001956">
    <property type="term" value="P:positive regulation of neurotransmitter secretion"/>
    <property type="evidence" value="ECO:0007669"/>
    <property type="project" value="Ensembl"/>
</dbReference>
<dbReference type="GO" id="GO:1904377">
    <property type="term" value="P:positive regulation of protein localization to cell periphery"/>
    <property type="evidence" value="ECO:0007669"/>
    <property type="project" value="Ensembl"/>
</dbReference>
<dbReference type="GO" id="GO:0001921">
    <property type="term" value="P:positive regulation of receptor recycling"/>
    <property type="evidence" value="ECO:0007669"/>
    <property type="project" value="Ensembl"/>
</dbReference>
<dbReference type="GO" id="GO:0051281">
    <property type="term" value="P:positive regulation of release of sequestered calcium ion into cytosol"/>
    <property type="evidence" value="ECO:0007669"/>
    <property type="project" value="Ensembl"/>
</dbReference>
<dbReference type="GO" id="GO:0035543">
    <property type="term" value="P:positive regulation of SNARE complex assembly"/>
    <property type="evidence" value="ECO:0007669"/>
    <property type="project" value="Ensembl"/>
</dbReference>
<dbReference type="GO" id="GO:0031648">
    <property type="term" value="P:protein destabilization"/>
    <property type="evidence" value="ECO:0007669"/>
    <property type="project" value="Ensembl"/>
</dbReference>
<dbReference type="GO" id="GO:0051262">
    <property type="term" value="P:protein tetramerization"/>
    <property type="evidence" value="ECO:0007669"/>
    <property type="project" value="Ensembl"/>
</dbReference>
<dbReference type="GO" id="GO:0031623">
    <property type="term" value="P:receptor internalization"/>
    <property type="evidence" value="ECO:0007669"/>
    <property type="project" value="Ensembl"/>
</dbReference>
<dbReference type="GO" id="GO:0050812">
    <property type="term" value="P:regulation of acyl-CoA biosynthetic process"/>
    <property type="evidence" value="ECO:0007669"/>
    <property type="project" value="Ensembl"/>
</dbReference>
<dbReference type="GO" id="GO:0014059">
    <property type="term" value="P:regulation of dopamine secretion"/>
    <property type="evidence" value="ECO:0007669"/>
    <property type="project" value="Ensembl"/>
</dbReference>
<dbReference type="GO" id="GO:0014048">
    <property type="term" value="P:regulation of glutamate secretion"/>
    <property type="evidence" value="ECO:0007669"/>
    <property type="project" value="Ensembl"/>
</dbReference>
<dbReference type="GO" id="GO:0040012">
    <property type="term" value="P:regulation of locomotion"/>
    <property type="evidence" value="ECO:0007669"/>
    <property type="project" value="Ensembl"/>
</dbReference>
<dbReference type="GO" id="GO:0048169">
    <property type="term" value="P:regulation of long-term neuronal synaptic plasticity"/>
    <property type="evidence" value="ECO:0007669"/>
    <property type="project" value="Ensembl"/>
</dbReference>
<dbReference type="GO" id="GO:0043030">
    <property type="term" value="P:regulation of macrophage activation"/>
    <property type="evidence" value="ECO:0007669"/>
    <property type="project" value="Ensembl"/>
</dbReference>
<dbReference type="GO" id="GO:1905606">
    <property type="term" value="P:regulation of presynapse assembly"/>
    <property type="evidence" value="ECO:0007669"/>
    <property type="project" value="Ensembl"/>
</dbReference>
<dbReference type="GO" id="GO:0070555">
    <property type="term" value="P:response to interleukin-1"/>
    <property type="evidence" value="ECO:0007669"/>
    <property type="project" value="Ensembl"/>
</dbReference>
<dbReference type="GO" id="GO:0010040">
    <property type="term" value="P:response to iron(II) ion"/>
    <property type="evidence" value="ECO:0007669"/>
    <property type="project" value="Ensembl"/>
</dbReference>
<dbReference type="GO" id="GO:0032496">
    <property type="term" value="P:response to lipopolysaccharide"/>
    <property type="evidence" value="ECO:0007669"/>
    <property type="project" value="Ensembl"/>
</dbReference>
<dbReference type="GO" id="GO:0032026">
    <property type="term" value="P:response to magnesium ion"/>
    <property type="evidence" value="ECO:0007669"/>
    <property type="project" value="Ensembl"/>
</dbReference>
<dbReference type="GO" id="GO:0034341">
    <property type="term" value="P:response to type II interferon"/>
    <property type="evidence" value="ECO:0007669"/>
    <property type="project" value="Ensembl"/>
</dbReference>
<dbReference type="GO" id="GO:0009410">
    <property type="term" value="P:response to xenobiotic stimulus"/>
    <property type="evidence" value="ECO:0007669"/>
    <property type="project" value="Ensembl"/>
</dbReference>
<dbReference type="GO" id="GO:0035493">
    <property type="term" value="P:SNARE complex assembly"/>
    <property type="evidence" value="ECO:0007669"/>
    <property type="project" value="Ensembl"/>
</dbReference>
<dbReference type="GO" id="GO:0050808">
    <property type="term" value="P:synapse organization"/>
    <property type="evidence" value="ECO:0000318"/>
    <property type="project" value="GO_Central"/>
</dbReference>
<dbReference type="GO" id="GO:0001963">
    <property type="term" value="P:synaptic transmission, dopaminergic"/>
    <property type="evidence" value="ECO:0007669"/>
    <property type="project" value="Ensembl"/>
</dbReference>
<dbReference type="GO" id="GO:0048488">
    <property type="term" value="P:synaptic vesicle endocytosis"/>
    <property type="evidence" value="ECO:0000318"/>
    <property type="project" value="GO_Central"/>
</dbReference>
<dbReference type="GO" id="GO:0016082">
    <property type="term" value="P:synaptic vesicle priming"/>
    <property type="evidence" value="ECO:0007669"/>
    <property type="project" value="Ensembl"/>
</dbReference>
<dbReference type="GO" id="GO:0048489">
    <property type="term" value="P:synaptic vesicle transport"/>
    <property type="evidence" value="ECO:0007669"/>
    <property type="project" value="Ensembl"/>
</dbReference>
<dbReference type="FunFam" id="1.10.287.700:FF:000001">
    <property type="entry name" value="Alpha-synuclein"/>
    <property type="match status" value="1"/>
</dbReference>
<dbReference type="Gene3D" id="1.10.287.700">
    <property type="entry name" value="Helix hairpin bin"/>
    <property type="match status" value="1"/>
</dbReference>
<dbReference type="InterPro" id="IPR001058">
    <property type="entry name" value="Synuclein"/>
</dbReference>
<dbReference type="InterPro" id="IPR002460">
    <property type="entry name" value="Synuclein_alpha"/>
</dbReference>
<dbReference type="PANTHER" id="PTHR13820:SF5">
    <property type="entry name" value="ALPHA-SYNUCLEIN"/>
    <property type="match status" value="1"/>
</dbReference>
<dbReference type="PANTHER" id="PTHR13820">
    <property type="entry name" value="SYNUCLEIN"/>
    <property type="match status" value="1"/>
</dbReference>
<dbReference type="Pfam" id="PF01387">
    <property type="entry name" value="Synuclein"/>
    <property type="match status" value="1"/>
</dbReference>
<dbReference type="PRINTS" id="PR01212">
    <property type="entry name" value="ASYNUCLEIN"/>
</dbReference>
<dbReference type="PRINTS" id="PR01211">
    <property type="entry name" value="SYNUCLEIN"/>
</dbReference>
<dbReference type="SUPFAM" id="SSF118375">
    <property type="entry name" value="Synuclein"/>
    <property type="match status" value="1"/>
</dbReference>
<keyword id="KW-0007">Acetylation</keyword>
<keyword id="KW-0966">Cell projection</keyword>
<keyword id="KW-0186">Copper</keyword>
<keyword id="KW-0963">Cytoplasm</keyword>
<keyword id="KW-0472">Membrane</keyword>
<keyword id="KW-0479">Metal-binding</keyword>
<keyword id="KW-0539">Nucleus</keyword>
<keyword id="KW-0597">Phosphoprotein</keyword>
<keyword id="KW-1185">Reference proteome</keyword>
<keyword id="KW-0677">Repeat</keyword>
<keyword id="KW-0964">Secreted</keyword>
<keyword id="KW-0770">Synapse</keyword>
<keyword id="KW-0832">Ubl conjugation</keyword>
<comment type="function">
    <text evidence="4">Neuronal protein that plays several roles in synaptic activity such as regulation of synaptic vesicle trafficking and subsequent neurotransmitter release (By similarity). Participates as a monomer in synaptic vesicle exocytosis by enhancing vesicle priming, fusion and dilation of exocytotic fusion pores (By similarity). Mechanistically, acts by increasing local Ca(2+) release from microdomains which is essential for the enhancement of ATP-induced exocytosis (By similarity). Also acts as a molecular chaperone in its multimeric membrane-bound state, assisting in the folding of synaptic fusion components called SNAREs (Soluble NSF Attachment Protein REceptors) at presynaptic plasma membrane in conjunction with cysteine string protein-alpha/DNAJC5 (By similarity). This chaperone activity is important to sustain normal SNARE-complex assembly during aging (By similarity). Also plays a role in the regulation of the dopamine neurotransmission by associating with the dopamine transporter (DAT1) and thereby modulating its activity (By similarity).</text>
</comment>
<comment type="subunit">
    <text evidence="2 3 4">Soluble monomer. Homotetramer. A dynamic intracellular population of tetramers and monomers coexists normally and the tetramer plays an essential role in maintaining homeostasis (By similarity). Interacts with UCHL1 (By similarity). Interacts with phospholipase D and histones. Interacts (via N-terminus) with synphilin-1/SNCAIP; this interaction promotes formation of SNCA inclusions in the cytoplasm. Interacts with CALM1. Interacts with STXBP1; this interaction controls SNCA self-replicating aggregation. Interacts with SNARE components VAMP2 and SNAP25; these interactions allows SNARE complex assembly and integrity (By similarity). Interacts with RPH3A and RAB3A (By similarity). Interacts with SERF1A; this interaction promotes the aggregation of SNCA (By similarity). Interacts with SEPTIN4 (By similarity). Interacts with DDX10; this interaction causes DDX10 mislocalization to the nucleoplasm and cytoplasmic inclusions (By similarity).</text>
</comment>
<comment type="subcellular location">
    <subcellularLocation>
        <location evidence="4">Cytoplasm</location>
    </subcellularLocation>
    <subcellularLocation>
        <location evidence="4">Membrane</location>
    </subcellularLocation>
    <subcellularLocation>
        <location evidence="4">Nucleus</location>
    </subcellularLocation>
    <subcellularLocation>
        <location evidence="4">Synapse</location>
    </subcellularLocation>
    <subcellularLocation>
        <location evidence="4">Secreted</location>
    </subcellularLocation>
    <subcellularLocation>
        <location evidence="2">Cell projection</location>
        <location evidence="2">Axon</location>
    </subcellularLocation>
    <text evidence="2 4">Membrane-bound in dopaminergic neurons (By similarity). Expressed and colocalized with SEPTIN4 in dopaminergic axon terminals, especially at the varicosities (By similarity).</text>
</comment>
<comment type="PTM">
    <text evidence="4">Phosphorylated, predominantly on serine residues. Phosphorylated on Tyr-125 upon osmotic stress.</text>
</comment>
<comment type="PTM">
    <text evidence="3">Ubiquitinated. The predominant conjugate is the diubiquitinated form.</text>
</comment>
<comment type="PTM">
    <text evidence="4">Acetylation at Met-1 seems to be important for proper folding and native oligomeric structure.</text>
</comment>
<comment type="similarity">
    <text evidence="6">Belongs to the synuclein family.</text>
</comment>
<evidence type="ECO:0000250" key="1"/>
<evidence type="ECO:0000250" key="2">
    <source>
        <dbReference type="UniProtKB" id="O55042"/>
    </source>
</evidence>
<evidence type="ECO:0000250" key="3">
    <source>
        <dbReference type="UniProtKB" id="P37377"/>
    </source>
</evidence>
<evidence type="ECO:0000250" key="4">
    <source>
        <dbReference type="UniProtKB" id="P37840"/>
    </source>
</evidence>
<evidence type="ECO:0000256" key="5">
    <source>
        <dbReference type="SAM" id="MobiDB-lite"/>
    </source>
</evidence>
<evidence type="ECO:0000305" key="6"/>
<sequence length="140" mass="14460">MDVFMKGLSKAKEGVVAAAEKTKQGVAEAAGKTKEGVLYVGSKTKEGVVHGVATVAEKTKEQVTNVGGAVVTGVTAVAQKTVEGAGSIAAATGFVKKDQLGKNEEGAPQEGILEDMPVDPDNEAYEMPSEEGYQDYEPEA</sequence>
<reference key="1">
    <citation type="journal article" date="2004" name="Genomics">
        <title>Alpha-synuclein A53T substitution associated with Parkinson disease also marks the divergence of Old World and New World primates.</title>
        <authorList>
            <person name="Hamilton B.A."/>
        </authorList>
    </citation>
    <scope>NUCLEOTIDE SEQUENCE [GENOMIC DNA]</scope>
</reference>
<name>SYUA_PANTR</name>
<protein>
    <recommendedName>
        <fullName>Alpha-synuclein</fullName>
    </recommendedName>
</protein>
<gene>
    <name type="primary">SNCA</name>
</gene>